<reference key="1">
    <citation type="journal article" date="1991" name="Mol. Gen. Genet.">
        <title>The regulatory status of the fixL- and fixJ-like genes in Bradyrhizobium japonicum may be different from that in Rhizobium meliloti.</title>
        <authorList>
            <person name="Anthamatten D."/>
            <person name="Hennecke H."/>
        </authorList>
    </citation>
    <scope>NUCLEOTIDE SEQUENCE [GENOMIC DNA]</scope>
    <source>
        <strain>USDA 110spc4</strain>
    </source>
</reference>
<reference key="2">
    <citation type="journal article" date="2002" name="DNA Res.">
        <title>Complete genomic sequence of nitrogen-fixing symbiotic bacterium Bradyrhizobium japonicum USDA110.</title>
        <authorList>
            <person name="Kaneko T."/>
            <person name="Nakamura Y."/>
            <person name="Sato S."/>
            <person name="Minamisawa K."/>
            <person name="Uchiumi T."/>
            <person name="Sasamoto S."/>
            <person name="Watanabe A."/>
            <person name="Idesawa K."/>
            <person name="Iriguchi M."/>
            <person name="Kawashima K."/>
            <person name="Kohara M."/>
            <person name="Matsumoto M."/>
            <person name="Shimpo S."/>
            <person name="Tsuruoka H."/>
            <person name="Wada T."/>
            <person name="Yamada M."/>
            <person name="Tabata S."/>
        </authorList>
    </citation>
    <scope>NUCLEOTIDE SEQUENCE [LARGE SCALE GENOMIC DNA]</scope>
    <source>
        <strain>JCM 10833 / BCRC 13528 / IAM 13628 / NBRC 14792 / USDA 110</strain>
    </source>
</reference>
<feature type="chain" id="PRO_0000081101" description="Transcriptional regulatory protein FixJ">
    <location>
        <begin position="1"/>
        <end position="205"/>
    </location>
</feature>
<feature type="domain" description="Response regulatory" evidence="2">
    <location>
        <begin position="6"/>
        <end position="120"/>
    </location>
</feature>
<feature type="domain" description="HTH luxR-type" evidence="3">
    <location>
        <begin position="136"/>
        <end position="201"/>
    </location>
</feature>
<feature type="DNA-binding region" description="H-T-H motif" evidence="3">
    <location>
        <begin position="160"/>
        <end position="179"/>
    </location>
</feature>
<feature type="binding site" evidence="1">
    <location>
        <position position="11"/>
    </location>
    <ligand>
        <name>Mg(2+)</name>
        <dbReference type="ChEBI" id="CHEBI:18420"/>
    </ligand>
</feature>
<feature type="binding site" evidence="1">
    <location>
        <position position="12"/>
    </location>
    <ligand>
        <name>Mg(2+)</name>
        <dbReference type="ChEBI" id="CHEBI:18420"/>
    </ligand>
</feature>
<feature type="binding site" evidence="1">
    <location>
        <position position="55"/>
    </location>
    <ligand>
        <name>Mg(2+)</name>
        <dbReference type="ChEBI" id="CHEBI:18420"/>
    </ligand>
</feature>
<feature type="binding site" evidence="1">
    <location>
        <position position="57"/>
    </location>
    <ligand>
        <name>Mg(2+)</name>
        <dbReference type="ChEBI" id="CHEBI:18420"/>
    </ligand>
</feature>
<feature type="modified residue" description="4-aspartylphosphate" evidence="2">
    <location>
        <position position="55"/>
    </location>
</feature>
<comment type="function">
    <text>FixJ, when activated by FixL, induces the expression of both nifA, required for activation of classical nif and fix genes, and fixK, required for FixN activation.</text>
</comment>
<comment type="cofactor">
    <cofactor evidence="1">
        <name>Mg(2+)</name>
        <dbReference type="ChEBI" id="CHEBI:18420"/>
    </cofactor>
    <text evidence="1">Binds 1 Mg(2+) ion per subunit.</text>
</comment>
<comment type="subcellular location">
    <subcellularLocation>
        <location evidence="4">Cytoplasm</location>
    </subcellularLocation>
</comment>
<comment type="PTM">
    <text evidence="4">Phosphorylated by FixL.</text>
</comment>
<dbReference type="EMBL" id="X56808">
    <property type="protein sequence ID" value="CAA40144.1"/>
    <property type="molecule type" value="Genomic_DNA"/>
</dbReference>
<dbReference type="EMBL" id="AJ005001">
    <property type="protein sequence ID" value="CAA06275.1"/>
    <property type="molecule type" value="Genomic_DNA"/>
</dbReference>
<dbReference type="EMBL" id="BA000040">
    <property type="protein sequence ID" value="BAC48024.1"/>
    <property type="molecule type" value="Genomic_DNA"/>
</dbReference>
<dbReference type="PIR" id="S13331">
    <property type="entry name" value="S13331"/>
</dbReference>
<dbReference type="RefSeq" id="NP_769399.1">
    <property type="nucleotide sequence ID" value="NC_004463.1"/>
</dbReference>
<dbReference type="RefSeq" id="WP_011085544.1">
    <property type="nucleotide sequence ID" value="NC_004463.1"/>
</dbReference>
<dbReference type="SMR" id="P23221"/>
<dbReference type="STRING" id="224911.AAV28_10820"/>
<dbReference type="EnsemblBacteria" id="BAC48024">
    <property type="protein sequence ID" value="BAC48024"/>
    <property type="gene ID" value="BAC48024"/>
</dbReference>
<dbReference type="GeneID" id="46489805"/>
<dbReference type="KEGG" id="bja:bll2759"/>
<dbReference type="PATRIC" id="fig|224911.44.peg.2380"/>
<dbReference type="eggNOG" id="COG4566">
    <property type="taxonomic scope" value="Bacteria"/>
</dbReference>
<dbReference type="HOGENOM" id="CLU_000445_90_4_5"/>
<dbReference type="InParanoid" id="P23221"/>
<dbReference type="OrthoDB" id="9782655at2"/>
<dbReference type="PhylomeDB" id="P23221"/>
<dbReference type="Proteomes" id="UP000002526">
    <property type="component" value="Chromosome"/>
</dbReference>
<dbReference type="GO" id="GO:0005737">
    <property type="term" value="C:cytoplasm"/>
    <property type="evidence" value="ECO:0007669"/>
    <property type="project" value="UniProtKB-SubCell"/>
</dbReference>
<dbReference type="GO" id="GO:0003677">
    <property type="term" value="F:DNA binding"/>
    <property type="evidence" value="ECO:0007669"/>
    <property type="project" value="UniProtKB-KW"/>
</dbReference>
<dbReference type="GO" id="GO:0046872">
    <property type="term" value="F:metal ion binding"/>
    <property type="evidence" value="ECO:0007669"/>
    <property type="project" value="UniProtKB-KW"/>
</dbReference>
<dbReference type="GO" id="GO:0009399">
    <property type="term" value="P:nitrogen fixation"/>
    <property type="evidence" value="ECO:0007669"/>
    <property type="project" value="UniProtKB-KW"/>
</dbReference>
<dbReference type="GO" id="GO:0000160">
    <property type="term" value="P:phosphorelay signal transduction system"/>
    <property type="evidence" value="ECO:0007669"/>
    <property type="project" value="UniProtKB-KW"/>
</dbReference>
<dbReference type="GO" id="GO:0006355">
    <property type="term" value="P:regulation of DNA-templated transcription"/>
    <property type="evidence" value="ECO:0007669"/>
    <property type="project" value="InterPro"/>
</dbReference>
<dbReference type="CDD" id="cd06170">
    <property type="entry name" value="LuxR_C_like"/>
    <property type="match status" value="1"/>
</dbReference>
<dbReference type="CDD" id="cd17537">
    <property type="entry name" value="REC_FixJ"/>
    <property type="match status" value="1"/>
</dbReference>
<dbReference type="FunFam" id="3.40.50.2300:FF:000018">
    <property type="entry name" value="DNA-binding transcriptional regulator NtrC"/>
    <property type="match status" value="1"/>
</dbReference>
<dbReference type="Gene3D" id="3.40.50.2300">
    <property type="match status" value="1"/>
</dbReference>
<dbReference type="Gene3D" id="1.10.10.10">
    <property type="entry name" value="Winged helix-like DNA-binding domain superfamily/Winged helix DNA-binding domain"/>
    <property type="match status" value="1"/>
</dbReference>
<dbReference type="InterPro" id="IPR011006">
    <property type="entry name" value="CheY-like_superfamily"/>
</dbReference>
<dbReference type="InterPro" id="IPR016032">
    <property type="entry name" value="Sig_transdc_resp-reg_C-effctor"/>
</dbReference>
<dbReference type="InterPro" id="IPR001789">
    <property type="entry name" value="Sig_transdc_resp-reg_receiver"/>
</dbReference>
<dbReference type="InterPro" id="IPR000792">
    <property type="entry name" value="Tscrpt_reg_LuxR_C"/>
</dbReference>
<dbReference type="InterPro" id="IPR036388">
    <property type="entry name" value="WH-like_DNA-bd_sf"/>
</dbReference>
<dbReference type="NCBIfam" id="NF006900">
    <property type="entry name" value="PRK09390.1"/>
    <property type="match status" value="1"/>
</dbReference>
<dbReference type="PANTHER" id="PTHR44688">
    <property type="entry name" value="DNA-BINDING TRANSCRIPTIONAL ACTIVATOR DEVR_DOSR"/>
    <property type="match status" value="1"/>
</dbReference>
<dbReference type="PANTHER" id="PTHR44688:SF16">
    <property type="entry name" value="DNA-BINDING TRANSCRIPTIONAL ACTIVATOR DEVR_DOSR"/>
    <property type="match status" value="1"/>
</dbReference>
<dbReference type="Pfam" id="PF00196">
    <property type="entry name" value="GerE"/>
    <property type="match status" value="1"/>
</dbReference>
<dbReference type="Pfam" id="PF00072">
    <property type="entry name" value="Response_reg"/>
    <property type="match status" value="1"/>
</dbReference>
<dbReference type="PRINTS" id="PR00038">
    <property type="entry name" value="HTHLUXR"/>
</dbReference>
<dbReference type="SMART" id="SM00421">
    <property type="entry name" value="HTH_LUXR"/>
    <property type="match status" value="1"/>
</dbReference>
<dbReference type="SMART" id="SM00448">
    <property type="entry name" value="REC"/>
    <property type="match status" value="1"/>
</dbReference>
<dbReference type="SUPFAM" id="SSF46894">
    <property type="entry name" value="C-terminal effector domain of the bipartite response regulators"/>
    <property type="match status" value="1"/>
</dbReference>
<dbReference type="SUPFAM" id="SSF52172">
    <property type="entry name" value="CheY-like"/>
    <property type="match status" value="1"/>
</dbReference>
<dbReference type="PROSITE" id="PS00622">
    <property type="entry name" value="HTH_LUXR_1"/>
    <property type="match status" value="1"/>
</dbReference>
<dbReference type="PROSITE" id="PS50043">
    <property type="entry name" value="HTH_LUXR_2"/>
    <property type="match status" value="1"/>
</dbReference>
<dbReference type="PROSITE" id="PS50110">
    <property type="entry name" value="RESPONSE_REGULATORY"/>
    <property type="match status" value="1"/>
</dbReference>
<gene>
    <name type="primary">fixJ</name>
    <name type="ordered locus">bll2759</name>
</gene>
<organism>
    <name type="scientific">Bradyrhizobium diazoefficiens (strain JCM 10833 / BCRC 13528 / IAM 13628 / NBRC 14792 / USDA 110)</name>
    <dbReference type="NCBI Taxonomy" id="224911"/>
    <lineage>
        <taxon>Bacteria</taxon>
        <taxon>Pseudomonadati</taxon>
        <taxon>Pseudomonadota</taxon>
        <taxon>Alphaproteobacteria</taxon>
        <taxon>Hyphomicrobiales</taxon>
        <taxon>Nitrobacteraceae</taxon>
        <taxon>Bradyrhizobium</taxon>
    </lineage>
</organism>
<sequence length="205" mass="22318">MTTKGHIYVIDDDAAMRDSLNFLLDSAGFGVTLFDDAQAFLDALPGLSFGCVVSDVRMPGLDGIELLKRMKAQQSPFPILIMTGHGDVPLAVEAMKLGAVDFLEKPFEDDRLTAMIESAIRQAEPAAKSEAVAQDIAARVASLSPRERQVMEGLIAGLSNKLIAREYDISPRTIEVYRANVMTKMQANSLSELVRLAMRAGMLND</sequence>
<accession>P23221</accession>
<evidence type="ECO:0000250" key="1"/>
<evidence type="ECO:0000255" key="2">
    <source>
        <dbReference type="PROSITE-ProRule" id="PRU00169"/>
    </source>
</evidence>
<evidence type="ECO:0000255" key="3">
    <source>
        <dbReference type="PROSITE-ProRule" id="PRU00411"/>
    </source>
</evidence>
<evidence type="ECO:0000305" key="4"/>
<name>FIXJ_BRADU</name>
<proteinExistence type="inferred from homology"/>
<keyword id="KW-0010">Activator</keyword>
<keyword id="KW-0963">Cytoplasm</keyword>
<keyword id="KW-0238">DNA-binding</keyword>
<keyword id="KW-0460">Magnesium</keyword>
<keyword id="KW-0479">Metal-binding</keyword>
<keyword id="KW-0535">Nitrogen fixation</keyword>
<keyword id="KW-0597">Phosphoprotein</keyword>
<keyword id="KW-1185">Reference proteome</keyword>
<keyword id="KW-0804">Transcription</keyword>
<keyword id="KW-0805">Transcription regulation</keyword>
<keyword id="KW-0902">Two-component regulatory system</keyword>
<protein>
    <recommendedName>
        <fullName>Transcriptional regulatory protein FixJ</fullName>
    </recommendedName>
</protein>